<comment type="function">
    <text evidence="1 2 3">Essential antioxidant peroxidase that directly reduces phospholipid hydroperoxide even if they are incorporated in membranes and lipoproteins (By similarity). Can also reduce fatty acid hydroperoxide, cholesterol hydroperoxide and thymine hydroperoxide (By similarity). Plays a key role in protecting cells from oxidative damage by preventing membrane lipid peroxidation (By similarity). Required to prevent cells from ferroptosis, a non-apoptotic cell death resulting from an iron-dependent accumulation of lipid reactive oxygen species (By similarity). The presence of selenocysteine (Sec) versus Cys at the active site is essential for life: it provides resistance to overoxidation and prevents cells against ferroptosis (By similarity). The presence of Sec at the active site is also essential for the survival of a specific type of parvalbumin-positive interneurons, thereby preventing against fatal epileptic seizures (By similarity). May be required to protect cells from the toxicity of ingested lipid hydroperoxides (By similarity). Required for normal sperm development and male fertility (By similarity). Essential for maturation and survival of photoreceptor cells (By similarity). Plays a role in a primary T-cell response to viral and parasitic infection by protecting T-cells from ferroptosis and by supporting T-cell expansion (By similarity). Plays a role of glutathione peroxidase in platelets in the arachidonic acid metabolism (By similarity). Reduces hydroperoxy ester lipids formed by a 15-lipoxygenase that may play a role as down-regulator of the cellular 15-lipoxygenase pathway (By similarity). Can also reduce small soluble hydroperoxides such as H2O2, cumene hydroperoxide and tert-butyl hydroperoxide (By similarity).</text>
</comment>
<comment type="catalytic activity">
    <reaction evidence="2">
        <text>a hydroperoxy polyunsaturated fatty acid + 2 glutathione = a hydroxy polyunsaturated fatty acid + glutathione disulfide + H2O</text>
        <dbReference type="Rhea" id="RHEA:19057"/>
        <dbReference type="ChEBI" id="CHEBI:15377"/>
        <dbReference type="ChEBI" id="CHEBI:57925"/>
        <dbReference type="ChEBI" id="CHEBI:58297"/>
        <dbReference type="ChEBI" id="CHEBI:131871"/>
        <dbReference type="ChEBI" id="CHEBI:134019"/>
        <dbReference type="EC" id="1.11.1.12"/>
    </reaction>
    <physiologicalReaction direction="left-to-right" evidence="2">
        <dbReference type="Rhea" id="RHEA:19058"/>
    </physiologicalReaction>
</comment>
<comment type="catalytic activity">
    <reaction evidence="3">
        <text>2 glutathione + H2O2 = glutathione disulfide + 2 H2O</text>
        <dbReference type="Rhea" id="RHEA:16833"/>
        <dbReference type="ChEBI" id="CHEBI:15377"/>
        <dbReference type="ChEBI" id="CHEBI:16240"/>
        <dbReference type="ChEBI" id="CHEBI:57925"/>
        <dbReference type="ChEBI" id="CHEBI:58297"/>
        <dbReference type="EC" id="1.11.1.9"/>
    </reaction>
    <physiologicalReaction direction="left-to-right" evidence="3">
        <dbReference type="Rhea" id="RHEA:16834"/>
    </physiologicalReaction>
</comment>
<comment type="catalytic activity">
    <reaction evidence="3">
        <text>tert-butyl hydroperoxide + 2 glutathione = tert-butanol + glutathione disulfide + H2O</text>
        <dbReference type="Rhea" id="RHEA:69412"/>
        <dbReference type="ChEBI" id="CHEBI:15377"/>
        <dbReference type="ChEBI" id="CHEBI:45895"/>
        <dbReference type="ChEBI" id="CHEBI:57925"/>
        <dbReference type="ChEBI" id="CHEBI:58297"/>
        <dbReference type="ChEBI" id="CHEBI:64090"/>
    </reaction>
    <physiologicalReaction direction="left-to-right" evidence="3">
        <dbReference type="Rhea" id="RHEA:69413"/>
    </physiologicalReaction>
</comment>
<comment type="catalytic activity">
    <reaction evidence="3">
        <text>cumene hydroperoxide + 2 glutathione = 2-phenylpropan-2-ol + glutathione disulfide + H2O</text>
        <dbReference type="Rhea" id="RHEA:69651"/>
        <dbReference type="ChEBI" id="CHEBI:15377"/>
        <dbReference type="ChEBI" id="CHEBI:57925"/>
        <dbReference type="ChEBI" id="CHEBI:58297"/>
        <dbReference type="ChEBI" id="CHEBI:78673"/>
        <dbReference type="ChEBI" id="CHEBI:131607"/>
    </reaction>
    <physiologicalReaction direction="left-to-right" evidence="3">
        <dbReference type="Rhea" id="RHEA:69652"/>
    </physiologicalReaction>
</comment>
<comment type="catalytic activity">
    <reaction evidence="3">
        <text>(9S)-hydroperoxy-(10E,12Z)-octadecadienoate + 2 glutathione = (9S)-hydroxy-(10E,12Z)-octadecadienoate + glutathione disulfide + H2O</text>
        <dbReference type="Rhea" id="RHEA:76687"/>
        <dbReference type="ChEBI" id="CHEBI:15377"/>
        <dbReference type="ChEBI" id="CHEBI:57925"/>
        <dbReference type="ChEBI" id="CHEBI:58297"/>
        <dbReference type="ChEBI" id="CHEBI:60955"/>
        <dbReference type="ChEBI" id="CHEBI:77852"/>
    </reaction>
    <physiologicalReaction direction="left-to-right" evidence="3">
        <dbReference type="Rhea" id="RHEA:76688"/>
    </physiologicalReaction>
</comment>
<comment type="catalytic activity">
    <reaction evidence="3">
        <text>(13S)-hydroperoxy-(9Z,11E)-octadecadienoate + 2 glutathione = (13S)-hydroxy-(9Z,11E)-octadecadienoate + glutathione disulfide + H2O</text>
        <dbReference type="Rhea" id="RHEA:48888"/>
        <dbReference type="ChEBI" id="CHEBI:15377"/>
        <dbReference type="ChEBI" id="CHEBI:57466"/>
        <dbReference type="ChEBI" id="CHEBI:57925"/>
        <dbReference type="ChEBI" id="CHEBI:58297"/>
        <dbReference type="ChEBI" id="CHEBI:90850"/>
    </reaction>
    <physiologicalReaction direction="left-to-right" evidence="3">
        <dbReference type="Rhea" id="RHEA:48889"/>
    </physiologicalReaction>
</comment>
<comment type="catalytic activity">
    <reaction evidence="3">
        <text>(5S)-hydroperoxy-(6E,8Z,11Z,14Z)-eicosatetraenoate + 2 glutathione = (5S)-hydroxy-(6E,8Z,11Z,14Z)-eicosatetraenoate + glutathione disulfide + H2O</text>
        <dbReference type="Rhea" id="RHEA:48620"/>
        <dbReference type="ChEBI" id="CHEBI:15377"/>
        <dbReference type="ChEBI" id="CHEBI:57450"/>
        <dbReference type="ChEBI" id="CHEBI:57925"/>
        <dbReference type="ChEBI" id="CHEBI:58297"/>
        <dbReference type="ChEBI" id="CHEBI:90632"/>
    </reaction>
    <physiologicalReaction direction="left-to-right" evidence="3">
        <dbReference type="Rhea" id="RHEA:48621"/>
    </physiologicalReaction>
</comment>
<comment type="catalytic activity">
    <reaction evidence="3">
        <text>(12R)-hydroperoxy-(5Z,8Z,10E,14Z)-eicosatetraenoate + 2 glutathione = (12R)-hydroxy-(5Z,8Z,10E,14Z)-eicosatetraenoate + glutathione disulfide + H2O</text>
        <dbReference type="Rhea" id="RHEA:76691"/>
        <dbReference type="ChEBI" id="CHEBI:15377"/>
        <dbReference type="ChEBI" id="CHEBI:57925"/>
        <dbReference type="ChEBI" id="CHEBI:58297"/>
        <dbReference type="ChEBI" id="CHEBI:75230"/>
        <dbReference type="ChEBI" id="CHEBI:83343"/>
    </reaction>
    <physiologicalReaction direction="left-to-right" evidence="3">
        <dbReference type="Rhea" id="RHEA:76692"/>
    </physiologicalReaction>
</comment>
<comment type="catalytic activity">
    <reaction evidence="3">
        <text>(12S)-hydroperoxy-(5Z,8Z,10E,14Z)-eicosatetraenoate + 2 glutathione = (12S)-hydroxy-(5Z,8Z,10E,14Z)-eicosatetraenoate + glutathione disulfide + H2O</text>
        <dbReference type="Rhea" id="RHEA:50708"/>
        <dbReference type="ChEBI" id="CHEBI:15377"/>
        <dbReference type="ChEBI" id="CHEBI:57444"/>
        <dbReference type="ChEBI" id="CHEBI:57925"/>
        <dbReference type="ChEBI" id="CHEBI:58297"/>
        <dbReference type="ChEBI" id="CHEBI:90680"/>
    </reaction>
    <physiologicalReaction direction="left-to-right" evidence="3">
        <dbReference type="Rhea" id="RHEA:50709"/>
    </physiologicalReaction>
</comment>
<comment type="catalytic activity">
    <reaction evidence="3">
        <text>(15S)-hydroperoxy-(5Z,8Z,11Z,13E)-eicosatetraenoate + 2 glutathione = (15S)-hydroxy-(5Z,8Z,11Z,13E)-eicosatetraenoate + glutathione disulfide + H2O</text>
        <dbReference type="Rhea" id="RHEA:76695"/>
        <dbReference type="ChEBI" id="CHEBI:15377"/>
        <dbReference type="ChEBI" id="CHEBI:57409"/>
        <dbReference type="ChEBI" id="CHEBI:57446"/>
        <dbReference type="ChEBI" id="CHEBI:57925"/>
        <dbReference type="ChEBI" id="CHEBI:58297"/>
    </reaction>
    <physiologicalReaction direction="left-to-right" evidence="3">
        <dbReference type="Rhea" id="RHEA:76696"/>
    </physiologicalReaction>
</comment>
<comment type="catalytic activity">
    <reaction evidence="3">
        <text>(5S)-hydroperoxy-(6E,8Z,11Z,14Z,17Z)-eicosapentaenoate + 2 glutathione = (5S)-hydroxy-(6E,8Z,11Z,14Z,17Z)-eicosapentaenoate + glutathione disulfide + H2O</text>
        <dbReference type="Rhea" id="RHEA:76699"/>
        <dbReference type="ChEBI" id="CHEBI:15377"/>
        <dbReference type="ChEBI" id="CHEBI:57925"/>
        <dbReference type="ChEBI" id="CHEBI:58297"/>
        <dbReference type="ChEBI" id="CHEBI:195399"/>
        <dbReference type="ChEBI" id="CHEBI:195400"/>
    </reaction>
    <physiologicalReaction direction="left-to-right" evidence="3">
        <dbReference type="Rhea" id="RHEA:76700"/>
    </physiologicalReaction>
</comment>
<comment type="catalytic activity">
    <reaction evidence="3">
        <text>(12S)-hydroperoxy-(5Z,8Z,10E,14Z,17Z)-eicosapentaenoate + 2 glutathione = (12S)-hydroxy-(5Z,8Z,10E,14Z,17Z)-eicosapentaenoate + glutathione disulfide + H2O</text>
        <dbReference type="Rhea" id="RHEA:76703"/>
        <dbReference type="ChEBI" id="CHEBI:15377"/>
        <dbReference type="ChEBI" id="CHEBI:57925"/>
        <dbReference type="ChEBI" id="CHEBI:58297"/>
        <dbReference type="ChEBI" id="CHEBI:90772"/>
        <dbReference type="ChEBI" id="CHEBI:195401"/>
    </reaction>
    <physiologicalReaction direction="left-to-right" evidence="3">
        <dbReference type="Rhea" id="RHEA:76704"/>
    </physiologicalReaction>
</comment>
<comment type="catalytic activity">
    <reaction evidence="3">
        <text>(15S)-hydroperoxy-(5Z,8Z,11Z,13E,17Z)-eicosapentaenoate + 2 glutathione = (15S)-hydroxy-(5Z,8Z,11Z,13E,17Z)-eicosapentaenoate + glutathione disulfide + H2O</text>
        <dbReference type="Rhea" id="RHEA:76707"/>
        <dbReference type="ChEBI" id="CHEBI:15377"/>
        <dbReference type="ChEBI" id="CHEBI:57925"/>
        <dbReference type="ChEBI" id="CHEBI:58297"/>
        <dbReference type="ChEBI" id="CHEBI:132087"/>
        <dbReference type="ChEBI" id="CHEBI:194369"/>
    </reaction>
    <physiologicalReaction direction="left-to-right" evidence="3">
        <dbReference type="Rhea" id="RHEA:76708"/>
    </physiologicalReaction>
</comment>
<comment type="catalytic activity">
    <reaction evidence="3">
        <text>(15S)-hydroperoxy-(11Z,13E)-eicosadienoate + 2 glutathione = (15S)-hydroxy-(11Z,13E)-eicosadienoate + glutathione disulfide + H2O</text>
        <dbReference type="Rhea" id="RHEA:76711"/>
        <dbReference type="ChEBI" id="CHEBI:15377"/>
        <dbReference type="ChEBI" id="CHEBI:57925"/>
        <dbReference type="ChEBI" id="CHEBI:58297"/>
        <dbReference type="ChEBI" id="CHEBI:144832"/>
        <dbReference type="ChEBI" id="CHEBI:195402"/>
    </reaction>
    <physiologicalReaction direction="left-to-right" evidence="3">
        <dbReference type="Rhea" id="RHEA:76712"/>
    </physiologicalReaction>
</comment>
<comment type="catalytic activity">
    <reaction evidence="3">
        <text>(17S)-hydroperoxy-(4Z,7Z,10Z,13Z,15E,19Z)-docosahexaenoate + 2 glutathione = (17S)-hydroxy-(4Z,7Z,10Z,13Z,15E,19Z)-docosahexaenoate + glutathione disulfide + H2O</text>
        <dbReference type="Rhea" id="RHEA:76715"/>
        <dbReference type="ChEBI" id="CHEBI:15377"/>
        <dbReference type="ChEBI" id="CHEBI:57925"/>
        <dbReference type="ChEBI" id="CHEBI:58297"/>
        <dbReference type="ChEBI" id="CHEBI:133795"/>
        <dbReference type="ChEBI" id="CHEBI:195403"/>
    </reaction>
    <physiologicalReaction direction="left-to-right" evidence="3">
        <dbReference type="Rhea" id="RHEA:76716"/>
    </physiologicalReaction>
</comment>
<comment type="catalytic activity">
    <reaction evidence="3">
        <text>a hydroperoxy-1,2-diacyl-glycero-3-phosphocholine + 2 glutathione = a hydroxy-1,2-diacyl-glycero-3-phosphocholine + glutathione disulfide + H2O</text>
        <dbReference type="Rhea" id="RHEA:76731"/>
        <dbReference type="ChEBI" id="CHEBI:15377"/>
        <dbReference type="ChEBI" id="CHEBI:57925"/>
        <dbReference type="ChEBI" id="CHEBI:58297"/>
        <dbReference type="ChEBI" id="CHEBI:195423"/>
        <dbReference type="ChEBI" id="CHEBI:195424"/>
    </reaction>
    <physiologicalReaction direction="left-to-right" evidence="3">
        <dbReference type="Rhea" id="RHEA:76732"/>
    </physiologicalReaction>
</comment>
<comment type="subunit">
    <text evidence="3">Monomer. Has a tendency to form higher mass oligomers. Interacts with FUNDC1; this interaction promotes GPX4 recruitment into mitochondria through TOM/TIM complex where it is degraded by mitophagy.</text>
</comment>
<comment type="subcellular location">
    <molecule>Isoform Mitochondrial</molecule>
    <subcellularLocation>
        <location evidence="1">Mitochondrion</location>
    </subcellularLocation>
</comment>
<comment type="subcellular location">
    <molecule>Isoform Cytoplasmic</molecule>
    <subcellularLocation>
        <location evidence="1">Cytoplasm</location>
    </subcellularLocation>
</comment>
<comment type="alternative products">
    <event type="alternative initiation"/>
    <isoform>
        <id>Q4AEH0-1</id>
        <name>Mitochondrial</name>
        <sequence type="displayed"/>
    </isoform>
    <isoform>
        <id>Q4AEH0-2</id>
        <name>Cytoplasmic</name>
        <sequence type="described" ref="VSP_018742"/>
    </isoform>
</comment>
<comment type="tissue specificity">
    <text evidence="6">Expressed very intensively in the testis and weakly in lung, heart, and cerebellum.</text>
</comment>
<comment type="similarity">
    <text evidence="7">Belongs to the glutathione peroxidase family.</text>
</comment>
<feature type="transit peptide" description="Mitochondrion" evidence="5">
    <location>
        <begin position="1"/>
        <end status="unknown"/>
    </location>
</feature>
<feature type="chain" id="PRO_0000042611" description="Phospholipid hydroperoxide glutathione peroxidase">
    <location>
        <begin status="unknown"/>
        <end position="197"/>
    </location>
</feature>
<feature type="active site" evidence="1">
    <location>
        <position position="73"/>
    </location>
</feature>
<feature type="non-standard amino acid" description="Selenocysteine" evidence="1">
    <location>
        <position position="73"/>
    </location>
</feature>
<feature type="modified residue" description="Phosphoserine" evidence="4">
    <location>
        <position position="40"/>
    </location>
</feature>
<feature type="splice variant" id="VSP_018742" description="In isoform Cytoplasmic." evidence="7">
    <location>
        <begin position="1"/>
        <end position="27"/>
    </location>
</feature>
<name>GPX4_MACFU</name>
<gene>
    <name evidence="1" type="primary">GPX4</name>
</gene>
<accession>Q4AEH0</accession>
<keyword id="KW-0024">Alternative initiation</keyword>
<keyword id="KW-0963">Cytoplasm</keyword>
<keyword id="KW-0217">Developmental protein</keyword>
<keyword id="KW-0443">Lipid metabolism</keyword>
<keyword id="KW-0496">Mitochondrion</keyword>
<keyword id="KW-0560">Oxidoreductase</keyword>
<keyword id="KW-0575">Peroxidase</keyword>
<keyword id="KW-0597">Phosphoprotein</keyword>
<keyword id="KW-0712">Selenocysteine</keyword>
<keyword id="KW-0809">Transit peptide</keyword>
<evidence type="ECO:0000250" key="1">
    <source>
        <dbReference type="UniProtKB" id="O70325"/>
    </source>
</evidence>
<evidence type="ECO:0000250" key="2">
    <source>
        <dbReference type="UniProtKB" id="P36968"/>
    </source>
</evidence>
<evidence type="ECO:0000250" key="3">
    <source>
        <dbReference type="UniProtKB" id="P36969"/>
    </source>
</evidence>
<evidence type="ECO:0000250" key="4">
    <source>
        <dbReference type="UniProtKB" id="P36970"/>
    </source>
</evidence>
<evidence type="ECO:0000255" key="5"/>
<evidence type="ECO:0000269" key="6">
    <source>
    </source>
</evidence>
<evidence type="ECO:0000305" key="7"/>
<proteinExistence type="evidence at transcript level"/>
<protein>
    <recommendedName>
        <fullName evidence="1">Phospholipid hydroperoxide glutathione peroxidase</fullName>
        <shortName evidence="1">PHGPx</shortName>
        <ecNumber evidence="1">1.11.1.12</ecNumber>
    </recommendedName>
    <alternativeName>
        <fullName evidence="1">Glutathione peroxidase 4</fullName>
        <shortName evidence="1">GPx-4</shortName>
        <shortName evidence="1">GSHPx-4</shortName>
        <ecNumber evidence="3">1.11.1.9</ecNumber>
    </alternativeName>
</protein>
<sequence>MNLGRLCRLLKPALLCGALAAPGLAGTMCASRDDWRCARSMHEFSAKDIDGHMVNLDKYRGFVCIVTNVASQUGKTEVNYTQLVDLHARYAECGVRILAFPCNQFGKQEPGSNEKIKEFAAGYNVKFDMFSKICVNGDDAHPLWKWMKIQPKGKGILGNAIKWNFTKFLIDKNGCVVKRYGPMEEPLVIEKDLPHYF</sequence>
<organism>
    <name type="scientific">Macaca fuscata fuscata</name>
    <name type="common">Japanese macaque</name>
    <dbReference type="NCBI Taxonomy" id="9543"/>
    <lineage>
        <taxon>Eukaryota</taxon>
        <taxon>Metazoa</taxon>
        <taxon>Chordata</taxon>
        <taxon>Craniata</taxon>
        <taxon>Vertebrata</taxon>
        <taxon>Euteleostomi</taxon>
        <taxon>Mammalia</taxon>
        <taxon>Eutheria</taxon>
        <taxon>Euarchontoglires</taxon>
        <taxon>Primates</taxon>
        <taxon>Haplorrhini</taxon>
        <taxon>Catarrhini</taxon>
        <taxon>Cercopithecidae</taxon>
        <taxon>Cercopithecinae</taxon>
        <taxon>Macaca</taxon>
    </lineage>
</organism>
<reference key="1">
    <citation type="journal article" date="2005" name="Comp. Biochem. Physiol.">
        <title>Structure, gene expression, and evolution of primate glutathione peroxidases.</title>
        <authorList>
            <person name="Fukuhara R."/>
            <person name="Kageyama T."/>
        </authorList>
    </citation>
    <scope>NUCLEOTIDE SEQUENCE [MRNA]</scope>
    <scope>TISSUE SPECIFICITY</scope>
</reference>
<dbReference type="EC" id="1.11.1.12" evidence="1"/>
<dbReference type="EC" id="1.11.1.9" evidence="3"/>
<dbReference type="EMBL" id="AB121012">
    <property type="protein sequence ID" value="BAE17020.1"/>
    <property type="molecule type" value="mRNA"/>
</dbReference>
<dbReference type="PeroxiBase" id="3708">
    <property type="entry name" value="MfGPx04"/>
</dbReference>
<dbReference type="GO" id="GO:0005829">
    <property type="term" value="C:cytosol"/>
    <property type="evidence" value="ECO:0000250"/>
    <property type="project" value="UniProtKB"/>
</dbReference>
<dbReference type="GO" id="GO:0005739">
    <property type="term" value="C:mitochondrion"/>
    <property type="evidence" value="ECO:0007669"/>
    <property type="project" value="UniProtKB-SubCell"/>
</dbReference>
<dbReference type="GO" id="GO:0005634">
    <property type="term" value="C:nucleus"/>
    <property type="evidence" value="ECO:0007669"/>
    <property type="project" value="TreeGrafter"/>
</dbReference>
<dbReference type="GO" id="GO:0004602">
    <property type="term" value="F:glutathione peroxidase activity"/>
    <property type="evidence" value="ECO:0000250"/>
    <property type="project" value="UniProtKB"/>
</dbReference>
<dbReference type="GO" id="GO:0047066">
    <property type="term" value="F:phospholipid-hydroperoxide glutathione peroxidase activity"/>
    <property type="evidence" value="ECO:0000250"/>
    <property type="project" value="UniProtKB"/>
</dbReference>
<dbReference type="GO" id="GO:0019369">
    <property type="term" value="P:arachidonate metabolic process"/>
    <property type="evidence" value="ECO:0000250"/>
    <property type="project" value="UniProtKB"/>
</dbReference>
<dbReference type="GO" id="GO:0019372">
    <property type="term" value="P:lipoxygenase pathway"/>
    <property type="evidence" value="ECO:0000250"/>
    <property type="project" value="UniProtKB"/>
</dbReference>
<dbReference type="GO" id="GO:0110076">
    <property type="term" value="P:negative regulation of ferroptosis"/>
    <property type="evidence" value="ECO:0000250"/>
    <property type="project" value="UniProtKB"/>
</dbReference>
<dbReference type="GO" id="GO:0006979">
    <property type="term" value="P:response to oxidative stress"/>
    <property type="evidence" value="ECO:0000250"/>
    <property type="project" value="UniProtKB"/>
</dbReference>
<dbReference type="GO" id="GO:0007283">
    <property type="term" value="P:spermatogenesis"/>
    <property type="evidence" value="ECO:0000250"/>
    <property type="project" value="UniProtKB"/>
</dbReference>
<dbReference type="CDD" id="cd00340">
    <property type="entry name" value="GSH_Peroxidase"/>
    <property type="match status" value="1"/>
</dbReference>
<dbReference type="FunFam" id="3.40.30.10:FF:000111">
    <property type="entry name" value="Glutathione peroxidase"/>
    <property type="match status" value="1"/>
</dbReference>
<dbReference type="Gene3D" id="3.40.30.10">
    <property type="entry name" value="Glutaredoxin"/>
    <property type="match status" value="1"/>
</dbReference>
<dbReference type="InterPro" id="IPR000889">
    <property type="entry name" value="Glutathione_peroxidase"/>
</dbReference>
<dbReference type="InterPro" id="IPR029759">
    <property type="entry name" value="GPX_AS"/>
</dbReference>
<dbReference type="InterPro" id="IPR029760">
    <property type="entry name" value="GPX_CS"/>
</dbReference>
<dbReference type="InterPro" id="IPR036249">
    <property type="entry name" value="Thioredoxin-like_sf"/>
</dbReference>
<dbReference type="PANTHER" id="PTHR11592">
    <property type="entry name" value="GLUTATHIONE PEROXIDASE"/>
    <property type="match status" value="1"/>
</dbReference>
<dbReference type="PANTHER" id="PTHR11592:SF134">
    <property type="entry name" value="PHOSPHOLIPID HYDROPEROXIDE GLUTATHIONE PEROXIDASE"/>
    <property type="match status" value="1"/>
</dbReference>
<dbReference type="Pfam" id="PF00255">
    <property type="entry name" value="GSHPx"/>
    <property type="match status" value="1"/>
</dbReference>
<dbReference type="PIRSF" id="PIRSF000303">
    <property type="entry name" value="Glutathion_perox"/>
    <property type="match status" value="1"/>
</dbReference>
<dbReference type="SUPFAM" id="SSF52833">
    <property type="entry name" value="Thioredoxin-like"/>
    <property type="match status" value="1"/>
</dbReference>
<dbReference type="PROSITE" id="PS00460">
    <property type="entry name" value="GLUTATHIONE_PEROXID_1"/>
    <property type="match status" value="1"/>
</dbReference>
<dbReference type="PROSITE" id="PS00763">
    <property type="entry name" value="GLUTATHIONE_PEROXID_2"/>
    <property type="match status" value="1"/>
</dbReference>
<dbReference type="PROSITE" id="PS51355">
    <property type="entry name" value="GLUTATHIONE_PEROXID_3"/>
    <property type="match status" value="1"/>
</dbReference>